<organism>
    <name type="scientific">Neisseria gonorrhoeae (strain ATCC 700825 / FA 1090)</name>
    <dbReference type="NCBI Taxonomy" id="242231"/>
    <lineage>
        <taxon>Bacteria</taxon>
        <taxon>Pseudomonadati</taxon>
        <taxon>Pseudomonadota</taxon>
        <taxon>Betaproteobacteria</taxon>
        <taxon>Neisseriales</taxon>
        <taxon>Neisseriaceae</taxon>
        <taxon>Neisseria</taxon>
    </lineage>
</organism>
<proteinExistence type="inferred from homology"/>
<protein>
    <recommendedName>
        <fullName evidence="1">2-C-methyl-D-erythritol 2,4-cyclodiphosphate synthase</fullName>
        <shortName evidence="1">MECDP-synthase</shortName>
        <shortName evidence="1">MECPP-synthase</shortName>
        <shortName evidence="1">MECPS</shortName>
        <ecNumber evidence="1">4.6.1.12</ecNumber>
    </recommendedName>
</protein>
<dbReference type="EC" id="4.6.1.12" evidence="1"/>
<dbReference type="EMBL" id="AE004969">
    <property type="protein sequence ID" value="AAW89657.1"/>
    <property type="molecule type" value="Genomic_DNA"/>
</dbReference>
<dbReference type="RefSeq" id="WP_010951155.1">
    <property type="nucleotide sequence ID" value="NC_002946.2"/>
</dbReference>
<dbReference type="RefSeq" id="YP_208069.1">
    <property type="nucleotide sequence ID" value="NC_002946.2"/>
</dbReference>
<dbReference type="SMR" id="Q5F830"/>
<dbReference type="STRING" id="242231.NGO_0971"/>
<dbReference type="KEGG" id="ngo:NGO_0971"/>
<dbReference type="PATRIC" id="fig|242231.10.peg.1137"/>
<dbReference type="HOGENOM" id="CLU_084630_2_0_4"/>
<dbReference type="UniPathway" id="UPA00056">
    <property type="reaction ID" value="UER00095"/>
</dbReference>
<dbReference type="Proteomes" id="UP000000535">
    <property type="component" value="Chromosome"/>
</dbReference>
<dbReference type="GO" id="GO:0008685">
    <property type="term" value="F:2-C-methyl-D-erythritol 2,4-cyclodiphosphate synthase activity"/>
    <property type="evidence" value="ECO:0007669"/>
    <property type="project" value="UniProtKB-UniRule"/>
</dbReference>
<dbReference type="GO" id="GO:0046872">
    <property type="term" value="F:metal ion binding"/>
    <property type="evidence" value="ECO:0007669"/>
    <property type="project" value="UniProtKB-KW"/>
</dbReference>
<dbReference type="GO" id="GO:0019288">
    <property type="term" value="P:isopentenyl diphosphate biosynthetic process, methylerythritol 4-phosphate pathway"/>
    <property type="evidence" value="ECO:0007669"/>
    <property type="project" value="UniProtKB-UniRule"/>
</dbReference>
<dbReference type="GO" id="GO:0016114">
    <property type="term" value="P:terpenoid biosynthetic process"/>
    <property type="evidence" value="ECO:0007669"/>
    <property type="project" value="InterPro"/>
</dbReference>
<dbReference type="CDD" id="cd00554">
    <property type="entry name" value="MECDP_synthase"/>
    <property type="match status" value="1"/>
</dbReference>
<dbReference type="FunFam" id="3.30.1330.50:FF:000001">
    <property type="entry name" value="2-C-methyl-D-erythritol 2,4-cyclodiphosphate synthase"/>
    <property type="match status" value="1"/>
</dbReference>
<dbReference type="Gene3D" id="3.30.1330.50">
    <property type="entry name" value="2-C-methyl-D-erythritol 2,4-cyclodiphosphate synthase"/>
    <property type="match status" value="1"/>
</dbReference>
<dbReference type="HAMAP" id="MF_00107">
    <property type="entry name" value="IspF"/>
    <property type="match status" value="1"/>
</dbReference>
<dbReference type="InterPro" id="IPR003526">
    <property type="entry name" value="MECDP_synthase"/>
</dbReference>
<dbReference type="InterPro" id="IPR020555">
    <property type="entry name" value="MECDP_synthase_CS"/>
</dbReference>
<dbReference type="InterPro" id="IPR036571">
    <property type="entry name" value="MECDP_synthase_sf"/>
</dbReference>
<dbReference type="NCBIfam" id="TIGR00151">
    <property type="entry name" value="ispF"/>
    <property type="match status" value="1"/>
</dbReference>
<dbReference type="PANTHER" id="PTHR43181">
    <property type="entry name" value="2-C-METHYL-D-ERYTHRITOL 2,4-CYCLODIPHOSPHATE SYNTHASE, CHLOROPLASTIC"/>
    <property type="match status" value="1"/>
</dbReference>
<dbReference type="PANTHER" id="PTHR43181:SF1">
    <property type="entry name" value="2-C-METHYL-D-ERYTHRITOL 2,4-CYCLODIPHOSPHATE SYNTHASE, CHLOROPLASTIC"/>
    <property type="match status" value="1"/>
</dbReference>
<dbReference type="Pfam" id="PF02542">
    <property type="entry name" value="YgbB"/>
    <property type="match status" value="1"/>
</dbReference>
<dbReference type="SUPFAM" id="SSF69765">
    <property type="entry name" value="IpsF-like"/>
    <property type="match status" value="1"/>
</dbReference>
<dbReference type="PROSITE" id="PS01350">
    <property type="entry name" value="ISPF"/>
    <property type="match status" value="1"/>
</dbReference>
<name>ISPF_NEIG1</name>
<feature type="chain" id="PRO_0000237734" description="2-C-methyl-D-erythritol 2,4-cyclodiphosphate synthase">
    <location>
        <begin position="1"/>
        <end position="160"/>
    </location>
</feature>
<feature type="binding site" evidence="1">
    <location>
        <begin position="11"/>
        <end position="13"/>
    </location>
    <ligand>
        <name>4-CDP-2-C-methyl-D-erythritol 2-phosphate</name>
        <dbReference type="ChEBI" id="CHEBI:57919"/>
    </ligand>
</feature>
<feature type="binding site" evidence="1">
    <location>
        <position position="11"/>
    </location>
    <ligand>
        <name>a divalent metal cation</name>
        <dbReference type="ChEBI" id="CHEBI:60240"/>
    </ligand>
</feature>
<feature type="binding site" evidence="1">
    <location>
        <position position="13"/>
    </location>
    <ligand>
        <name>a divalent metal cation</name>
        <dbReference type="ChEBI" id="CHEBI:60240"/>
    </ligand>
</feature>
<feature type="binding site" evidence="1">
    <location>
        <begin position="37"/>
        <end position="38"/>
    </location>
    <ligand>
        <name>4-CDP-2-C-methyl-D-erythritol 2-phosphate</name>
        <dbReference type="ChEBI" id="CHEBI:57919"/>
    </ligand>
</feature>
<feature type="binding site" evidence="1">
    <location>
        <position position="45"/>
    </location>
    <ligand>
        <name>a divalent metal cation</name>
        <dbReference type="ChEBI" id="CHEBI:60240"/>
    </ligand>
</feature>
<feature type="binding site" evidence="1">
    <location>
        <begin position="59"/>
        <end position="61"/>
    </location>
    <ligand>
        <name>4-CDP-2-C-methyl-D-erythritol 2-phosphate</name>
        <dbReference type="ChEBI" id="CHEBI:57919"/>
    </ligand>
</feature>
<feature type="binding site" evidence="1">
    <location>
        <position position="145"/>
    </location>
    <ligand>
        <name>4-CDP-2-C-methyl-D-erythritol 2-phosphate</name>
        <dbReference type="ChEBI" id="CHEBI:57919"/>
    </ligand>
</feature>
<feature type="site" description="Transition state stabilizer" evidence="1">
    <location>
        <position position="37"/>
    </location>
</feature>
<feature type="site" description="Transition state stabilizer" evidence="1">
    <location>
        <position position="136"/>
    </location>
</feature>
<comment type="function">
    <text evidence="1">Involved in the biosynthesis of isopentenyl diphosphate (IPP) and dimethylallyl diphosphate (DMAPP), two major building blocks of isoprenoid compounds. Catalyzes the conversion of 4-diphosphocytidyl-2-C-methyl-D-erythritol 2-phosphate (CDP-ME2P) to 2-C-methyl-D-erythritol 2,4-cyclodiphosphate (ME-CPP) with a corresponding release of cytidine 5-monophosphate (CMP).</text>
</comment>
<comment type="catalytic activity">
    <reaction evidence="1">
        <text>4-CDP-2-C-methyl-D-erythritol 2-phosphate = 2-C-methyl-D-erythritol 2,4-cyclic diphosphate + CMP</text>
        <dbReference type="Rhea" id="RHEA:23864"/>
        <dbReference type="ChEBI" id="CHEBI:57919"/>
        <dbReference type="ChEBI" id="CHEBI:58483"/>
        <dbReference type="ChEBI" id="CHEBI:60377"/>
        <dbReference type="EC" id="4.6.1.12"/>
    </reaction>
</comment>
<comment type="cofactor">
    <cofactor evidence="1">
        <name>a divalent metal cation</name>
        <dbReference type="ChEBI" id="CHEBI:60240"/>
    </cofactor>
    <text evidence="1">Binds 1 divalent metal cation per subunit.</text>
</comment>
<comment type="pathway">
    <text evidence="1">Isoprenoid biosynthesis; isopentenyl diphosphate biosynthesis via DXP pathway; isopentenyl diphosphate from 1-deoxy-D-xylulose 5-phosphate: step 4/6.</text>
</comment>
<comment type="subunit">
    <text evidence="1">Homotrimer.</text>
</comment>
<comment type="similarity">
    <text evidence="1">Belongs to the IspF family.</text>
</comment>
<reference key="1">
    <citation type="submission" date="2003-03" db="EMBL/GenBank/DDBJ databases">
        <title>The complete genome sequence of Neisseria gonorrhoeae.</title>
        <authorList>
            <person name="Lewis L.A."/>
            <person name="Gillaspy A.F."/>
            <person name="McLaughlin R.E."/>
            <person name="Gipson M."/>
            <person name="Ducey T.F."/>
            <person name="Ownbey T."/>
            <person name="Hartman K."/>
            <person name="Nydick C."/>
            <person name="Carson M.B."/>
            <person name="Vaughn J."/>
            <person name="Thomson C."/>
            <person name="Song L."/>
            <person name="Lin S."/>
            <person name="Yuan X."/>
            <person name="Najar F."/>
            <person name="Zhan M."/>
            <person name="Ren Q."/>
            <person name="Zhu H."/>
            <person name="Qi S."/>
            <person name="Kenton S.M."/>
            <person name="Lai H."/>
            <person name="White J.D."/>
            <person name="Clifton S."/>
            <person name="Roe B.A."/>
            <person name="Dyer D.W."/>
        </authorList>
    </citation>
    <scope>NUCLEOTIDE SEQUENCE [LARGE SCALE GENOMIC DNA]</scope>
    <source>
        <strain>ATCC 700825 / FA 1090</strain>
    </source>
</reference>
<sequence length="160" mass="17048">MTNIRIGQGYDVHQLTEGRKLILGGVEIPFEKGLLGHSDADALLHAVTDALLGAAGLGDIGSHFPDTAAEFKDADSRVLLRAAYQSVQAQGWQVVNVDTTVIAQKPKLAPHIPQMRANIAADLGIDISCVNIKGKTNEKLGYLGRMEGIEAQAAVLLVRI</sequence>
<gene>
    <name evidence="1" type="primary">ispF</name>
    <name type="ordered locus">NGO_0971</name>
</gene>
<accession>Q5F830</accession>
<evidence type="ECO:0000255" key="1">
    <source>
        <dbReference type="HAMAP-Rule" id="MF_00107"/>
    </source>
</evidence>
<keyword id="KW-0414">Isoprene biosynthesis</keyword>
<keyword id="KW-0456">Lyase</keyword>
<keyword id="KW-0479">Metal-binding</keyword>
<keyword id="KW-1185">Reference proteome</keyword>